<sequence length="493" mass="53243">MTLAKHDSYDIVVVGTGAAGTAAALEAAQHGASVLLLEKGRHTGGSSNYTEGLFAVDSYLQKAQNINVSATDVLKEEVDYSKYRADSRIWRRYLDDSANTVQWLKDQGVEYEGVQAMGAGEATWHIYKGMGQAVLHDALQPQAQKLGVELLTSTTAITLHQATDGAITGVMIQSAATNETQVINTAAVILATGGYLNNPDMMQKLTHYDTRRLIPVSSGKGTGDGLRLAWQAGAQQYGTGMAMLFGGYLKDPSEPSFKYMASQMETAAGQQPLLWLNEHGERFVDEAVVYNFSYAGNALYTQNQVFSILDQGVINKMAQDGNFMGLGVYVRRGEKMTKLQAEIDAAVAANKPFIFKANTIEALATKMHLPVDQVTHSIQTYNQYCDNGQDDDFGKNPEYLVKVSQGPFYGFELNVGAFCTMGGLKVTTNNEVLDTTGQPITGLYAAGNDAAGLTGDTYGPNMPGTCVGYAFYSGRNSGRHAAQYTHQQSIVSH</sequence>
<accession>F9USN6</accession>
<name>VPR_LACPL</name>
<dbReference type="EC" id="1.1.1.-" evidence="3 9"/>
<dbReference type="EMBL" id="AL935263">
    <property type="protein sequence ID" value="CCC80166.1"/>
    <property type="molecule type" value="Genomic_DNA"/>
</dbReference>
<dbReference type="RefSeq" id="WP_011102053.1">
    <property type="nucleotide sequence ID" value="NC_004567.2"/>
</dbReference>
<dbReference type="RefSeq" id="YP_004890680.1">
    <property type="nucleotide sequence ID" value="NC_004567.2"/>
</dbReference>
<dbReference type="SMR" id="F9USN6"/>
<dbReference type="STRING" id="220668.lp_3125"/>
<dbReference type="EnsemblBacteria" id="CCC80166">
    <property type="protein sequence ID" value="CCC80166"/>
    <property type="gene ID" value="lp_3125"/>
</dbReference>
<dbReference type="KEGG" id="lpl:lp_3125"/>
<dbReference type="PATRIC" id="fig|220668.9.peg.2613"/>
<dbReference type="eggNOG" id="COG1053">
    <property type="taxonomic scope" value="Bacteria"/>
</dbReference>
<dbReference type="HOGENOM" id="CLU_011398_4_3_9"/>
<dbReference type="OrthoDB" id="9806724at2"/>
<dbReference type="PhylomeDB" id="F9USN6"/>
<dbReference type="Proteomes" id="UP000000432">
    <property type="component" value="Chromosome"/>
</dbReference>
<dbReference type="GO" id="GO:0033765">
    <property type="term" value="F:steroid dehydrogenase activity, acting on the CH-CH group of donors"/>
    <property type="evidence" value="ECO:0007669"/>
    <property type="project" value="UniProtKB-ARBA"/>
</dbReference>
<dbReference type="GO" id="GO:0008202">
    <property type="term" value="P:steroid metabolic process"/>
    <property type="evidence" value="ECO:0007669"/>
    <property type="project" value="UniProtKB-ARBA"/>
</dbReference>
<dbReference type="Gene3D" id="3.50.50.60">
    <property type="entry name" value="FAD/NAD(P)-binding domain"/>
    <property type="match status" value="1"/>
</dbReference>
<dbReference type="Gene3D" id="3.90.700.10">
    <property type="entry name" value="Succinate dehydrogenase/fumarate reductase flavoprotein, catalytic domain"/>
    <property type="match status" value="1"/>
</dbReference>
<dbReference type="InterPro" id="IPR003953">
    <property type="entry name" value="FAD-dep_OxRdtase_2_FAD-bd"/>
</dbReference>
<dbReference type="InterPro" id="IPR050315">
    <property type="entry name" value="FAD-oxidoreductase_2"/>
</dbReference>
<dbReference type="InterPro" id="IPR036188">
    <property type="entry name" value="FAD/NAD-bd_sf"/>
</dbReference>
<dbReference type="InterPro" id="IPR027477">
    <property type="entry name" value="Succ_DH/fumarate_Rdtase_cat_sf"/>
</dbReference>
<dbReference type="PANTHER" id="PTHR43400:SF10">
    <property type="entry name" value="3-OXOSTEROID 1-DEHYDROGENASE"/>
    <property type="match status" value="1"/>
</dbReference>
<dbReference type="PANTHER" id="PTHR43400">
    <property type="entry name" value="FUMARATE REDUCTASE"/>
    <property type="match status" value="1"/>
</dbReference>
<dbReference type="Pfam" id="PF00890">
    <property type="entry name" value="FAD_binding_2"/>
    <property type="match status" value="1"/>
</dbReference>
<dbReference type="PRINTS" id="PR00411">
    <property type="entry name" value="PNDRDTASEI"/>
</dbReference>
<dbReference type="SUPFAM" id="SSF51905">
    <property type="entry name" value="FAD/NAD(P)-binding domain"/>
    <property type="match status" value="1"/>
</dbReference>
<dbReference type="SUPFAM" id="SSF56425">
    <property type="entry name" value="Succinate dehydrogenase/fumarate reductase flavoprotein, catalytic domain"/>
    <property type="match status" value="1"/>
</dbReference>
<keyword id="KW-0274">FAD</keyword>
<keyword id="KW-0285">Flavoprotein</keyword>
<keyword id="KW-0560">Oxidoreductase</keyword>
<keyword id="KW-1185">Reference proteome</keyword>
<comment type="function">
    <text evidence="3 4">Involved in the production of ethylphenols during the degradation of hydroxycinnamic acids. Catalyzes the reduction of vinylphenols (4-vinylphenol (4-hydroxystyrene), 4-vinylcatechol (3,4-dihydroxystyrene), and 4-vinylguaiacol (2-methoxy-4-vinylphenol)) to their corresponding ethylphenols (4-ethylphenol, 4-ethylcatechol, and 4-ethylguaiacol, respectively) in the presence of NADH. These compounds are considered the most important flavor components of fermented soy sauce, and, on the other hand, are considered off flavor and responsible for sensorial wine and cider alteration (PubMed:29934329). The 4-ethylphenol produced by the gut bacteria L.plantarum strain WCFS1 can get subsequent sulfation to 4-ethylphenyl sulfate (4EPS) by host sulfotransferase (SULT1A1); 4EPS can enter the brain and seems to alter brain activity. Therefore, this enzyme likely plays a role in gut microbiota-host metabolic interactions (PubMed:35165440).</text>
</comment>
<comment type="catalytic activity">
    <reaction evidence="3 9">
        <text>4-vinylphenol + NADH + H(+) = 4-ethylphenol + NAD(+)</text>
        <dbReference type="Rhea" id="RHEA:70603"/>
        <dbReference type="ChEBI" id="CHEBI:1883"/>
        <dbReference type="ChEBI" id="CHEBI:15378"/>
        <dbReference type="ChEBI" id="CHEBI:49584"/>
        <dbReference type="ChEBI" id="CHEBI:57540"/>
        <dbReference type="ChEBI" id="CHEBI:57945"/>
    </reaction>
    <physiologicalReaction direction="left-to-right" evidence="3">
        <dbReference type="Rhea" id="RHEA:70604"/>
    </physiologicalReaction>
</comment>
<comment type="catalytic activity">
    <reaction evidence="3">
        <text>3,4-dihydroxystyrene + NADH + H(+) = 4-ethylcatechol + NAD(+)</text>
        <dbReference type="Rhea" id="RHEA:73955"/>
        <dbReference type="ChEBI" id="CHEBI:1390"/>
        <dbReference type="ChEBI" id="CHEBI:15378"/>
        <dbReference type="ChEBI" id="CHEBI:57540"/>
        <dbReference type="ChEBI" id="CHEBI:57945"/>
        <dbReference type="ChEBI" id="CHEBI:179260"/>
    </reaction>
    <physiologicalReaction direction="left-to-right" evidence="8">
        <dbReference type="Rhea" id="RHEA:73956"/>
    </physiologicalReaction>
</comment>
<comment type="catalytic activity">
    <reaction evidence="3">
        <text>2-methoxy-4-vinylphenol + NADH + H(+) = 4-ethyl-2-methoxyphenol + NAD(+)</text>
        <dbReference type="Rhea" id="RHEA:73959"/>
        <dbReference type="ChEBI" id="CHEBI:15378"/>
        <dbReference type="ChEBI" id="CHEBI:42438"/>
        <dbReference type="ChEBI" id="CHEBI:57540"/>
        <dbReference type="ChEBI" id="CHEBI:57945"/>
        <dbReference type="ChEBI" id="CHEBI:179252"/>
    </reaction>
    <physiologicalReaction direction="left-to-right" evidence="8">
        <dbReference type="Rhea" id="RHEA:73960"/>
    </physiologicalReaction>
</comment>
<comment type="cofactor">
    <cofactor evidence="3">
        <name>FAD</name>
        <dbReference type="ChEBI" id="CHEBI:57692"/>
    </cofactor>
</comment>
<comment type="induction">
    <text evidence="2 3">Is up-regulated (four-fold) by 4-coumarate (4-hydroxycinnamate) (PubMed:23065750, PubMed:29934329). Is also induced by its substrate, 4-vinylphenol (PubMed:29934329).</text>
</comment>
<comment type="disruption phenotype">
    <text evidence="3">Mutant lacking this gene is unable to reduce 4-vinylphenol to 4-ethylphenol, while its ability to reduce hydroxycinnamic acid is not affected.</text>
</comment>
<comment type="similarity">
    <text evidence="7">Belongs to the FAD-dependent oxidoreductase 2 family. FRD/SDH subfamily.</text>
</comment>
<gene>
    <name evidence="6" type="primary">vprA</name>
    <name evidence="10" type="ordered locus">lp_3125</name>
</gene>
<evidence type="ECO:0000250" key="1">
    <source>
        <dbReference type="UniProtKB" id="P83223"/>
    </source>
</evidence>
<evidence type="ECO:0000269" key="2">
    <source>
    </source>
</evidence>
<evidence type="ECO:0000269" key="3">
    <source>
    </source>
</evidence>
<evidence type="ECO:0000269" key="4">
    <source>
    </source>
</evidence>
<evidence type="ECO:0000303" key="5">
    <source>
    </source>
</evidence>
<evidence type="ECO:0000303" key="6">
    <source>
    </source>
</evidence>
<evidence type="ECO:0000305" key="7"/>
<evidence type="ECO:0000305" key="8">
    <source>
    </source>
</evidence>
<evidence type="ECO:0000305" key="9">
    <source>
    </source>
</evidence>
<evidence type="ECO:0000312" key="10">
    <source>
        <dbReference type="EMBL" id="CCC80166.1"/>
    </source>
</evidence>
<reference key="1">
    <citation type="journal article" date="2003" name="Proc. Natl. Acad. Sci. U.S.A.">
        <title>Complete genome sequence of Lactobacillus plantarum WCFS1.</title>
        <authorList>
            <person name="Kleerebezem M."/>
            <person name="Boekhorst J."/>
            <person name="van Kranenburg R."/>
            <person name="Molenaar D."/>
            <person name="Kuipers O.P."/>
            <person name="Leer R."/>
            <person name="Tarchini R."/>
            <person name="Peters S.A."/>
            <person name="Sandbrink H.M."/>
            <person name="Fiers M.W.E.J."/>
            <person name="Stiekema W."/>
            <person name="Klein Lankhorst R.M."/>
            <person name="Bron P.A."/>
            <person name="Hoffer S.M."/>
            <person name="Nierop Groot M.N."/>
            <person name="Kerkhoven R."/>
            <person name="De Vries M."/>
            <person name="Ursing B."/>
            <person name="De Vos W.M."/>
            <person name="Siezen R.J."/>
        </authorList>
    </citation>
    <scope>NUCLEOTIDE SEQUENCE [LARGE SCALE GENOMIC DNA]</scope>
    <source>
        <strain>ATCC BAA-793 / NCIMB 8826 / WCFS1</strain>
    </source>
</reference>
<reference key="2">
    <citation type="journal article" date="2012" name="J. Bacteriol.">
        <title>Complete resequencing and reannotation of the Lactobacillus plantarum WCFS1 genome.</title>
        <authorList>
            <person name="Siezen R.J."/>
            <person name="Francke C."/>
            <person name="Renckens B."/>
            <person name="Boekhorst J."/>
            <person name="Wels M."/>
            <person name="Kleerebezem M."/>
            <person name="van Hijum S.A."/>
        </authorList>
    </citation>
    <scope>NUCLEOTIDE SEQUENCE [LARGE SCALE GENOMIC DNA]</scope>
    <scope>GENOME REANNOTATION</scope>
    <source>
        <strain>ATCC BAA-793 / NCIMB 8826 / WCFS1</strain>
    </source>
</reference>
<reference key="3">
    <citation type="journal article" date="2012" name="Mol. Nutr. Food Res.">
        <title>Genome-wide transcriptomic responses of a human isolate of Lactobacillus plantarum exposed to p-coumaric acid stress.</title>
        <authorList>
            <person name="Reveron I."/>
            <person name="de Las Rivas B."/>
            <person name="Munoz R."/>
            <person name="Lopez de Felipe F."/>
        </authorList>
    </citation>
    <scope>INDUCTION BY 4-COUMARATE</scope>
    <source>
        <strain>ATCC BAA-793 / NCIMB 8826 / WCFS1</strain>
    </source>
</reference>
<reference key="4">
    <citation type="journal article" date="2018" name="Appl. Environ. Microbiol.">
        <title>Ethylphenol Formation by Lactobacillus plantarum: Identification of the Enzyme Involved in the Reduction of Vinylphenols.</title>
        <authorList>
            <person name="Santamaria L."/>
            <person name="Reveron I."/>
            <person name="de Felipe F.L."/>
            <person name="de Las Rivas B."/>
            <person name="Munoz R."/>
        </authorList>
    </citation>
    <scope>FUNCTION</scope>
    <scope>CATALYTIC ACTIVITY</scope>
    <scope>COFACTOR</scope>
    <scope>DISRUPTION PHENOTYPE</scope>
    <scope>INDUCTION</scope>
    <source>
        <strain>ATCC BAA-793 / NCIMB 8826 / WCFS1</strain>
    </source>
</reference>
<reference key="5">
    <citation type="journal article" date="2022" name="Nature">
        <title>A gut-derived metabolite alters brain activity and anxiety behaviour in mice.</title>
        <authorList>
            <person name="Needham B.D."/>
            <person name="Funabashi M."/>
            <person name="Adame M.D."/>
            <person name="Wang Z."/>
            <person name="Boktor J.C."/>
            <person name="Haney J."/>
            <person name="Wu W.L."/>
            <person name="Rabut C."/>
            <person name="Ladinsky M.S."/>
            <person name="Hwang S.J."/>
            <person name="Guo Y."/>
            <person name="Zhu Q."/>
            <person name="Griffiths J.A."/>
            <person name="Knight R."/>
            <person name="Bjorkman P.J."/>
            <person name="Shapiro M.G."/>
            <person name="Geschwind D.H."/>
            <person name="Holschneider D.P."/>
            <person name="Fischbach M.A."/>
            <person name="Mazmanian S.K."/>
        </authorList>
    </citation>
    <scope>FUNCTION</scope>
    <scope>CATALYTIC ACTIVITY</scope>
</reference>
<feature type="chain" id="PRO_0000457668" description="Vinyl phenol reductase">
    <location>
        <begin position="1"/>
        <end position="493"/>
    </location>
</feature>
<feature type="binding site" evidence="1">
    <location>
        <position position="19"/>
    </location>
    <ligand>
        <name>FAD</name>
        <dbReference type="ChEBI" id="CHEBI:57692"/>
    </ligand>
</feature>
<feature type="binding site" evidence="1">
    <location>
        <position position="38"/>
    </location>
    <ligand>
        <name>FAD</name>
        <dbReference type="ChEBI" id="CHEBI:57692"/>
    </ligand>
</feature>
<feature type="binding site" evidence="1">
    <location>
        <position position="46"/>
    </location>
    <ligand>
        <name>FAD</name>
        <dbReference type="ChEBI" id="CHEBI:57692"/>
    </ligand>
</feature>
<feature type="binding site" evidence="1">
    <location>
        <position position="50"/>
    </location>
    <ligand>
        <name>FAD</name>
        <dbReference type="ChEBI" id="CHEBI:57692"/>
    </ligand>
</feature>
<feature type="binding site" evidence="1">
    <location>
        <position position="52"/>
    </location>
    <ligand>
        <name>FAD</name>
        <dbReference type="ChEBI" id="CHEBI:57692"/>
    </ligand>
</feature>
<feature type="binding site" evidence="1">
    <location>
        <position position="156"/>
    </location>
    <ligand>
        <name>FAD</name>
        <dbReference type="ChEBI" id="CHEBI:57692"/>
    </ligand>
</feature>
<feature type="binding site" evidence="1">
    <location>
        <position position="224"/>
    </location>
    <ligand>
        <name>FAD</name>
        <dbReference type="ChEBI" id="CHEBI:57692"/>
    </ligand>
</feature>
<feature type="binding site" evidence="1">
    <location>
        <position position="448"/>
    </location>
    <ligand>
        <name>FAD</name>
        <dbReference type="ChEBI" id="CHEBI:57692"/>
    </ligand>
</feature>
<feature type="binding site" evidence="1">
    <location>
        <position position="467"/>
    </location>
    <ligand>
        <name>FAD</name>
        <dbReference type="ChEBI" id="CHEBI:57692"/>
    </ligand>
</feature>
<proteinExistence type="evidence at protein level"/>
<organism>
    <name type="scientific">Lactiplantibacillus plantarum (strain ATCC BAA-793 / NCIMB 8826 / WCFS1)</name>
    <name type="common">Lactobacillus plantarum</name>
    <dbReference type="NCBI Taxonomy" id="220668"/>
    <lineage>
        <taxon>Bacteria</taxon>
        <taxon>Bacillati</taxon>
        <taxon>Bacillota</taxon>
        <taxon>Bacilli</taxon>
        <taxon>Lactobacillales</taxon>
        <taxon>Lactobacillaceae</taxon>
        <taxon>Lactiplantibacillus</taxon>
    </lineage>
</organism>
<protein>
    <recommendedName>
        <fullName evidence="5 6">Vinyl phenol reductase</fullName>
        <shortName evidence="6">VPR</shortName>
        <ecNumber evidence="3 9">1.1.1.-</ecNumber>
    </recommendedName>
    <alternativeName>
        <fullName>4-vinylphenol reductase</fullName>
    </alternativeName>
</protein>